<organism>
    <name type="scientific">Clostridium botulinum (strain ATCC 19397 / Type A)</name>
    <dbReference type="NCBI Taxonomy" id="441770"/>
    <lineage>
        <taxon>Bacteria</taxon>
        <taxon>Bacillati</taxon>
        <taxon>Bacillota</taxon>
        <taxon>Clostridia</taxon>
        <taxon>Eubacteriales</taxon>
        <taxon>Clostridiaceae</taxon>
        <taxon>Clostridium</taxon>
    </lineage>
</organism>
<protein>
    <recommendedName>
        <fullName evidence="1">3-hydroxyacyl-[acyl-carrier-protein] dehydratase FabZ</fullName>
        <ecNumber evidence="1">4.2.1.59</ecNumber>
    </recommendedName>
    <alternativeName>
        <fullName evidence="1">(3R)-hydroxymyristoyl-[acyl-carrier-protein] dehydratase</fullName>
        <shortName evidence="1">(3R)-hydroxymyristoyl-ACP dehydrase</shortName>
    </alternativeName>
    <alternativeName>
        <fullName evidence="1">Beta-hydroxyacyl-ACP dehydratase</fullName>
    </alternativeName>
</protein>
<reference key="1">
    <citation type="journal article" date="2007" name="PLoS ONE">
        <title>Analysis of the neurotoxin complex genes in Clostridium botulinum A1-A4 and B1 strains: BoNT/A3, /Ba4 and /B1 clusters are located within plasmids.</title>
        <authorList>
            <person name="Smith T.J."/>
            <person name="Hill K.K."/>
            <person name="Foley B.T."/>
            <person name="Detter J.C."/>
            <person name="Munk A.C."/>
            <person name="Bruce D.C."/>
            <person name="Doggett N.A."/>
            <person name="Smith L.A."/>
            <person name="Marks J.D."/>
            <person name="Xie G."/>
            <person name="Brettin T.S."/>
        </authorList>
    </citation>
    <scope>NUCLEOTIDE SEQUENCE [LARGE SCALE GENOMIC DNA]</scope>
    <source>
        <strain>ATCC 19397 / Type A</strain>
    </source>
</reference>
<proteinExistence type="inferred from homology"/>
<name>FABZ_CLOB1</name>
<keyword id="KW-0963">Cytoplasm</keyword>
<keyword id="KW-0441">Lipid A biosynthesis</keyword>
<keyword id="KW-0444">Lipid biosynthesis</keyword>
<keyword id="KW-0443">Lipid metabolism</keyword>
<keyword id="KW-0456">Lyase</keyword>
<evidence type="ECO:0000255" key="1">
    <source>
        <dbReference type="HAMAP-Rule" id="MF_00406"/>
    </source>
</evidence>
<gene>
    <name evidence="1" type="primary">fabZ</name>
    <name type="ordered locus">CLB_3677</name>
</gene>
<accession>A7FPN7</accession>
<comment type="function">
    <text evidence="1">Involved in unsaturated fatty acids biosynthesis. Catalyzes the dehydration of short chain beta-hydroxyacyl-ACPs and long chain saturated and unsaturated beta-hydroxyacyl-ACPs.</text>
</comment>
<comment type="catalytic activity">
    <reaction evidence="1">
        <text>a (3R)-hydroxyacyl-[ACP] = a (2E)-enoyl-[ACP] + H2O</text>
        <dbReference type="Rhea" id="RHEA:13097"/>
        <dbReference type="Rhea" id="RHEA-COMP:9925"/>
        <dbReference type="Rhea" id="RHEA-COMP:9945"/>
        <dbReference type="ChEBI" id="CHEBI:15377"/>
        <dbReference type="ChEBI" id="CHEBI:78784"/>
        <dbReference type="ChEBI" id="CHEBI:78827"/>
        <dbReference type="EC" id="4.2.1.59"/>
    </reaction>
</comment>
<comment type="subcellular location">
    <subcellularLocation>
        <location evidence="1">Cytoplasm</location>
    </subcellularLocation>
</comment>
<comment type="similarity">
    <text evidence="1">Belongs to the thioester dehydratase family. FabZ subfamily.</text>
</comment>
<feature type="chain" id="PRO_0000340766" description="3-hydroxyacyl-[acyl-carrier-protein] dehydratase FabZ">
    <location>
        <begin position="1"/>
        <end position="144"/>
    </location>
</feature>
<feature type="active site" evidence="1">
    <location>
        <position position="51"/>
    </location>
</feature>
<sequence>MEKFLDINEIKKIIPHRYPFLLVDKITELEEGKSAVGYKNVTANEYFFNGHFPEEPVMPGVLIIEALAQVGAVAILSKEEFKGKIAYFGGINKAKFRKKVVPGDVLKLSIDLTKIKGVAGVGKAVATVDGKVAAEAELLFVIGK</sequence>
<dbReference type="EC" id="4.2.1.59" evidence="1"/>
<dbReference type="EMBL" id="CP000726">
    <property type="protein sequence ID" value="ABS34083.1"/>
    <property type="molecule type" value="Genomic_DNA"/>
</dbReference>
<dbReference type="RefSeq" id="WP_012048424.1">
    <property type="nucleotide sequence ID" value="NC_009697.1"/>
</dbReference>
<dbReference type="SMR" id="A7FPN7"/>
<dbReference type="GeneID" id="5186639"/>
<dbReference type="KEGG" id="cba:CLB_3677"/>
<dbReference type="HOGENOM" id="CLU_078912_3_0_9"/>
<dbReference type="GO" id="GO:0005737">
    <property type="term" value="C:cytoplasm"/>
    <property type="evidence" value="ECO:0007669"/>
    <property type="project" value="UniProtKB-SubCell"/>
</dbReference>
<dbReference type="GO" id="GO:0016020">
    <property type="term" value="C:membrane"/>
    <property type="evidence" value="ECO:0007669"/>
    <property type="project" value="GOC"/>
</dbReference>
<dbReference type="GO" id="GO:0019171">
    <property type="term" value="F:(3R)-hydroxyacyl-[acyl-carrier-protein] dehydratase activity"/>
    <property type="evidence" value="ECO:0007669"/>
    <property type="project" value="UniProtKB-EC"/>
</dbReference>
<dbReference type="GO" id="GO:0006633">
    <property type="term" value="P:fatty acid biosynthetic process"/>
    <property type="evidence" value="ECO:0007669"/>
    <property type="project" value="UniProtKB-UniRule"/>
</dbReference>
<dbReference type="GO" id="GO:0009245">
    <property type="term" value="P:lipid A biosynthetic process"/>
    <property type="evidence" value="ECO:0007669"/>
    <property type="project" value="UniProtKB-UniRule"/>
</dbReference>
<dbReference type="CDD" id="cd01288">
    <property type="entry name" value="FabZ"/>
    <property type="match status" value="1"/>
</dbReference>
<dbReference type="FunFam" id="3.10.129.10:FF:000001">
    <property type="entry name" value="3-hydroxyacyl-[acyl-carrier-protein] dehydratase FabZ"/>
    <property type="match status" value="1"/>
</dbReference>
<dbReference type="Gene3D" id="3.10.129.10">
    <property type="entry name" value="Hotdog Thioesterase"/>
    <property type="match status" value="1"/>
</dbReference>
<dbReference type="HAMAP" id="MF_00406">
    <property type="entry name" value="FabZ"/>
    <property type="match status" value="1"/>
</dbReference>
<dbReference type="InterPro" id="IPR013114">
    <property type="entry name" value="FabA_FabZ"/>
</dbReference>
<dbReference type="InterPro" id="IPR010084">
    <property type="entry name" value="FabZ"/>
</dbReference>
<dbReference type="InterPro" id="IPR029069">
    <property type="entry name" value="HotDog_dom_sf"/>
</dbReference>
<dbReference type="NCBIfam" id="TIGR01750">
    <property type="entry name" value="fabZ"/>
    <property type="match status" value="1"/>
</dbReference>
<dbReference type="NCBIfam" id="NF000582">
    <property type="entry name" value="PRK00006.1"/>
    <property type="match status" value="1"/>
</dbReference>
<dbReference type="PANTHER" id="PTHR30272">
    <property type="entry name" value="3-HYDROXYACYL-[ACYL-CARRIER-PROTEIN] DEHYDRATASE"/>
    <property type="match status" value="1"/>
</dbReference>
<dbReference type="PANTHER" id="PTHR30272:SF1">
    <property type="entry name" value="3-HYDROXYACYL-[ACYL-CARRIER-PROTEIN] DEHYDRATASE"/>
    <property type="match status" value="1"/>
</dbReference>
<dbReference type="Pfam" id="PF07977">
    <property type="entry name" value="FabA"/>
    <property type="match status" value="1"/>
</dbReference>
<dbReference type="SUPFAM" id="SSF54637">
    <property type="entry name" value="Thioesterase/thiol ester dehydrase-isomerase"/>
    <property type="match status" value="1"/>
</dbReference>